<organism>
    <name type="scientific">Methanocaldococcus jannaschii (strain ATCC 43067 / DSM 2661 / JAL-1 / JCM 10045 / NBRC 100440)</name>
    <name type="common">Methanococcus jannaschii</name>
    <dbReference type="NCBI Taxonomy" id="243232"/>
    <lineage>
        <taxon>Archaea</taxon>
        <taxon>Methanobacteriati</taxon>
        <taxon>Methanobacteriota</taxon>
        <taxon>Methanomada group</taxon>
        <taxon>Methanococci</taxon>
        <taxon>Methanococcales</taxon>
        <taxon>Methanocaldococcaceae</taxon>
        <taxon>Methanocaldococcus</taxon>
    </lineage>
</organism>
<proteinExistence type="inferred from homology"/>
<sequence length="58" mass="6256">MGIKILEKCVGCGNCVVFCPRRAIKTYGVAIVDENKCSNCGICARYCPINAIKVDTSL</sequence>
<reference key="1">
    <citation type="journal article" date="1996" name="Science">
        <title>Complete genome sequence of the methanogenic archaeon, Methanococcus jannaschii.</title>
        <authorList>
            <person name="Bult C.J."/>
            <person name="White O."/>
            <person name="Olsen G.J."/>
            <person name="Zhou L."/>
            <person name="Fleischmann R.D."/>
            <person name="Sutton G.G."/>
            <person name="Blake J.A."/>
            <person name="FitzGerald L.M."/>
            <person name="Clayton R.A."/>
            <person name="Gocayne J.D."/>
            <person name="Kerlavage A.R."/>
            <person name="Dougherty B.A."/>
            <person name="Tomb J.-F."/>
            <person name="Adams M.D."/>
            <person name="Reich C.I."/>
            <person name="Overbeek R."/>
            <person name="Kirkness E.F."/>
            <person name="Weinstock K.G."/>
            <person name="Merrick J.M."/>
            <person name="Glodek A."/>
            <person name="Scott J.L."/>
            <person name="Geoghagen N.S.M."/>
            <person name="Weidman J.F."/>
            <person name="Fuhrmann J.L."/>
            <person name="Nguyen D."/>
            <person name="Utterback T.R."/>
            <person name="Kelley J.M."/>
            <person name="Peterson J.D."/>
            <person name="Sadow P.W."/>
            <person name="Hanna M.C."/>
            <person name="Cotton M.D."/>
            <person name="Roberts K.M."/>
            <person name="Hurst M.A."/>
            <person name="Kaine B.P."/>
            <person name="Borodovsky M."/>
            <person name="Klenk H.-P."/>
            <person name="Fraser C.M."/>
            <person name="Smith H.O."/>
            <person name="Woese C.R."/>
            <person name="Venter J.C."/>
        </authorList>
    </citation>
    <scope>NUCLEOTIDE SEQUENCE [LARGE SCALE GENOMIC DNA]</scope>
    <source>
        <strain>ATCC 43067 / DSM 2661 / JAL-1 / JCM 10045 / NBRC 100440</strain>
    </source>
</reference>
<protein>
    <recommendedName>
        <fullName>Uncharacterized ferredoxin MJ0624</fullName>
    </recommendedName>
</protein>
<accession>Q58041</accession>
<feature type="chain" id="PRO_0000159134" description="Uncharacterized ferredoxin MJ0624">
    <location>
        <begin position="1"/>
        <end position="58"/>
    </location>
</feature>
<feature type="domain" description="4Fe-4S ferredoxin-type 1" evidence="2">
    <location>
        <begin position="2"/>
        <end position="27"/>
    </location>
</feature>
<feature type="domain" description="4Fe-4S ferredoxin-type 2" evidence="2">
    <location>
        <begin position="28"/>
        <end position="57"/>
    </location>
</feature>
<feature type="binding site" evidence="1">
    <location>
        <position position="9"/>
    </location>
    <ligand>
        <name>[4Fe-4S] cluster</name>
        <dbReference type="ChEBI" id="CHEBI:49883"/>
        <label>1</label>
    </ligand>
</feature>
<feature type="binding site" evidence="1">
    <location>
        <position position="12"/>
    </location>
    <ligand>
        <name>[4Fe-4S] cluster</name>
        <dbReference type="ChEBI" id="CHEBI:49883"/>
        <label>1</label>
    </ligand>
</feature>
<feature type="binding site" evidence="1">
    <location>
        <position position="15"/>
    </location>
    <ligand>
        <name>[4Fe-4S] cluster</name>
        <dbReference type="ChEBI" id="CHEBI:49883"/>
        <label>1</label>
    </ligand>
</feature>
<feature type="binding site" evidence="1">
    <location>
        <position position="19"/>
    </location>
    <ligand>
        <name>[4Fe-4S] cluster</name>
        <dbReference type="ChEBI" id="CHEBI:49883"/>
        <label>2</label>
    </ligand>
</feature>
<feature type="binding site" evidence="1">
    <location>
        <position position="37"/>
    </location>
    <ligand>
        <name>[4Fe-4S] cluster</name>
        <dbReference type="ChEBI" id="CHEBI:49883"/>
        <label>2</label>
    </ligand>
</feature>
<feature type="binding site" evidence="1">
    <location>
        <position position="40"/>
    </location>
    <ligand>
        <name>[4Fe-4S] cluster</name>
        <dbReference type="ChEBI" id="CHEBI:49883"/>
        <label>2</label>
    </ligand>
</feature>
<feature type="binding site" evidence="1">
    <location>
        <position position="43"/>
    </location>
    <ligand>
        <name>[4Fe-4S] cluster</name>
        <dbReference type="ChEBI" id="CHEBI:49883"/>
        <label>2</label>
    </ligand>
</feature>
<feature type="binding site" evidence="1">
    <location>
        <position position="47"/>
    </location>
    <ligand>
        <name>[4Fe-4S] cluster</name>
        <dbReference type="ChEBI" id="CHEBI:49883"/>
        <label>1</label>
    </ligand>
</feature>
<name>FER6_METJA</name>
<gene>
    <name type="ordered locus">MJ0624</name>
</gene>
<dbReference type="EMBL" id="L77117">
    <property type="protein sequence ID" value="AAB98619.1"/>
    <property type="molecule type" value="Genomic_DNA"/>
</dbReference>
<dbReference type="PIR" id="H64377">
    <property type="entry name" value="H64377"/>
</dbReference>
<dbReference type="RefSeq" id="WP_010870129.1">
    <property type="nucleotide sequence ID" value="NC_000909.1"/>
</dbReference>
<dbReference type="SMR" id="Q58041"/>
<dbReference type="STRING" id="243232.MJ_0624"/>
<dbReference type="PaxDb" id="243232-MJ_0624"/>
<dbReference type="EnsemblBacteria" id="AAB98619">
    <property type="protein sequence ID" value="AAB98619"/>
    <property type="gene ID" value="MJ_0624"/>
</dbReference>
<dbReference type="GeneID" id="1451490"/>
<dbReference type="KEGG" id="mja:MJ_0624"/>
<dbReference type="eggNOG" id="arCOG02060">
    <property type="taxonomic scope" value="Archaea"/>
</dbReference>
<dbReference type="HOGENOM" id="CLU_139698_11_4_2"/>
<dbReference type="InParanoid" id="Q58041"/>
<dbReference type="OrthoDB" id="23833at2157"/>
<dbReference type="PhylomeDB" id="Q58041"/>
<dbReference type="Proteomes" id="UP000000805">
    <property type="component" value="Chromosome"/>
</dbReference>
<dbReference type="GO" id="GO:0051539">
    <property type="term" value="F:4 iron, 4 sulfur cluster binding"/>
    <property type="evidence" value="ECO:0007669"/>
    <property type="project" value="UniProtKB-KW"/>
</dbReference>
<dbReference type="GO" id="GO:0046872">
    <property type="term" value="F:metal ion binding"/>
    <property type="evidence" value="ECO:0007669"/>
    <property type="project" value="UniProtKB-KW"/>
</dbReference>
<dbReference type="GO" id="GO:0016491">
    <property type="term" value="F:oxidoreductase activity"/>
    <property type="evidence" value="ECO:0007669"/>
    <property type="project" value="UniProtKB-ARBA"/>
</dbReference>
<dbReference type="Gene3D" id="3.30.70.20">
    <property type="match status" value="1"/>
</dbReference>
<dbReference type="InterPro" id="IPR017896">
    <property type="entry name" value="4Fe4S_Fe-S-bd"/>
</dbReference>
<dbReference type="InterPro" id="IPR017900">
    <property type="entry name" value="4Fe4S_Fe_S_CS"/>
</dbReference>
<dbReference type="InterPro" id="IPR050572">
    <property type="entry name" value="Fe-S_Ferredoxin"/>
</dbReference>
<dbReference type="PANTHER" id="PTHR43687">
    <property type="entry name" value="ADENYLYLSULFATE REDUCTASE, BETA SUBUNIT"/>
    <property type="match status" value="1"/>
</dbReference>
<dbReference type="PANTHER" id="PTHR43687:SF1">
    <property type="entry name" value="FERREDOXIN III"/>
    <property type="match status" value="1"/>
</dbReference>
<dbReference type="Pfam" id="PF00037">
    <property type="entry name" value="Fer4"/>
    <property type="match status" value="2"/>
</dbReference>
<dbReference type="SUPFAM" id="SSF54862">
    <property type="entry name" value="4Fe-4S ferredoxins"/>
    <property type="match status" value="1"/>
</dbReference>
<dbReference type="PROSITE" id="PS00198">
    <property type="entry name" value="4FE4S_FER_1"/>
    <property type="match status" value="2"/>
</dbReference>
<dbReference type="PROSITE" id="PS51379">
    <property type="entry name" value="4FE4S_FER_2"/>
    <property type="match status" value="2"/>
</dbReference>
<evidence type="ECO:0000250" key="1"/>
<evidence type="ECO:0000255" key="2">
    <source>
        <dbReference type="PROSITE-ProRule" id="PRU00711"/>
    </source>
</evidence>
<comment type="function">
    <text evidence="1">Ferredoxins are iron-sulfur proteins that transfer electrons probably in the CO-dehydrogenase complex.</text>
</comment>
<comment type="cofactor">
    <cofactor evidence="1">
        <name>[4Fe-4S] cluster</name>
        <dbReference type="ChEBI" id="CHEBI:49883"/>
    </cofactor>
    <text evidence="1">Binds 2 [4Fe-4S] clusters.</text>
</comment>
<keyword id="KW-0004">4Fe-4S</keyword>
<keyword id="KW-0249">Electron transport</keyword>
<keyword id="KW-0408">Iron</keyword>
<keyword id="KW-0411">Iron-sulfur</keyword>
<keyword id="KW-0479">Metal-binding</keyword>
<keyword id="KW-1185">Reference proteome</keyword>
<keyword id="KW-0677">Repeat</keyword>
<keyword id="KW-0813">Transport</keyword>